<sequence>MGQKINPLGFRLGTTQSHRSLWFAQPKDYSRNLQEDEKIRDCIKNYVQKHMRISSGFQGIARLGIQKRIDLIQVTIYIGSSNLLIEGPTRGIEELRTDVQKKLNSMNRRLNITITRIARPYEQPNILAEYIALQLKNRVSFRKAMKKAIELAEQANTKGIRVQIAGRLNGKEIARVEWIREGRVPLHTIRAKIDYCSYMVQTIYGVLGIKIWIFVDEE</sequence>
<reference key="1">
    <citation type="journal article" date="2003" name="Mol. Biol. Evol.">
        <title>Analysis of the Amborella trichopoda chloroplast genome sequence suggests that Amborella is not a basal angiosperm.</title>
        <authorList>
            <person name="Goremykin V.V."/>
            <person name="Hirsch-Ernst K.I."/>
            <person name="Wolfl S."/>
            <person name="Hellwig F.H."/>
        </authorList>
    </citation>
    <scope>NUCLEOTIDE SEQUENCE [LARGE SCALE GENOMIC DNA]</scope>
</reference>
<keyword id="KW-0150">Chloroplast</keyword>
<keyword id="KW-0934">Plastid</keyword>
<keyword id="KW-1185">Reference proteome</keyword>
<keyword id="KW-0687">Ribonucleoprotein</keyword>
<keyword id="KW-0689">Ribosomal protein</keyword>
<keyword id="KW-0694">RNA-binding</keyword>
<keyword id="KW-0699">rRNA-binding</keyword>
<organism>
    <name type="scientific">Amborella trichopoda</name>
    <dbReference type="NCBI Taxonomy" id="13333"/>
    <lineage>
        <taxon>Eukaryota</taxon>
        <taxon>Viridiplantae</taxon>
        <taxon>Streptophyta</taxon>
        <taxon>Embryophyta</taxon>
        <taxon>Tracheophyta</taxon>
        <taxon>Spermatophyta</taxon>
        <taxon>Magnoliopsida</taxon>
        <taxon>Amborellales</taxon>
        <taxon>Amborellaceae</taxon>
        <taxon>Amborella</taxon>
    </lineage>
</organism>
<name>RR3_AMBTC</name>
<gene>
    <name type="primary">rps3</name>
</gene>
<accession>Q70XX2</accession>
<feature type="chain" id="PRO_0000130267" description="Small ribosomal subunit protein uS3c">
    <location>
        <begin position="1"/>
        <end position="218"/>
    </location>
</feature>
<feature type="domain" description="KH type-2">
    <location>
        <begin position="47"/>
        <end position="118"/>
    </location>
</feature>
<comment type="subunit">
    <text evidence="1">Part of the 30S ribosomal subunit.</text>
</comment>
<comment type="subcellular location">
    <subcellularLocation>
        <location>Plastid</location>
        <location>Chloroplast</location>
    </subcellularLocation>
</comment>
<comment type="similarity">
    <text evidence="2">Belongs to the universal ribosomal protein uS3 family.</text>
</comment>
<proteinExistence type="inferred from homology"/>
<geneLocation type="chloroplast"/>
<evidence type="ECO:0000250" key="1"/>
<evidence type="ECO:0000305" key="2"/>
<protein>
    <recommendedName>
        <fullName evidence="2">Small ribosomal subunit protein uS3c</fullName>
    </recommendedName>
    <alternativeName>
        <fullName>30S ribosomal protein S3, chloroplastic</fullName>
    </alternativeName>
</protein>
<dbReference type="EMBL" id="AJ506156">
    <property type="protein sequence ID" value="CAD45145.1"/>
    <property type="molecule type" value="Genomic_DNA"/>
</dbReference>
<dbReference type="RefSeq" id="NP_904137.1">
    <property type="nucleotide sequence ID" value="NC_005086.1"/>
</dbReference>
<dbReference type="SMR" id="Q70XX2"/>
<dbReference type="STRING" id="13333.Q70XX2"/>
<dbReference type="GeneID" id="2546562"/>
<dbReference type="KEGG" id="atr:2546562"/>
<dbReference type="OrthoDB" id="1842609at2759"/>
<dbReference type="Proteomes" id="UP000017836">
    <property type="component" value="Chloroplast"/>
</dbReference>
<dbReference type="GO" id="GO:0009507">
    <property type="term" value="C:chloroplast"/>
    <property type="evidence" value="ECO:0007669"/>
    <property type="project" value="UniProtKB-SubCell"/>
</dbReference>
<dbReference type="GO" id="GO:0022627">
    <property type="term" value="C:cytosolic small ribosomal subunit"/>
    <property type="evidence" value="ECO:0000318"/>
    <property type="project" value="GO_Central"/>
</dbReference>
<dbReference type="GO" id="GO:0019843">
    <property type="term" value="F:rRNA binding"/>
    <property type="evidence" value="ECO:0007669"/>
    <property type="project" value="UniProtKB-UniRule"/>
</dbReference>
<dbReference type="GO" id="GO:0003735">
    <property type="term" value="F:structural constituent of ribosome"/>
    <property type="evidence" value="ECO:0000318"/>
    <property type="project" value="GO_Central"/>
</dbReference>
<dbReference type="GO" id="GO:0006412">
    <property type="term" value="P:translation"/>
    <property type="evidence" value="ECO:0007669"/>
    <property type="project" value="UniProtKB-UniRule"/>
</dbReference>
<dbReference type="CDD" id="cd02412">
    <property type="entry name" value="KH-II_30S_S3"/>
    <property type="match status" value="1"/>
</dbReference>
<dbReference type="FunFam" id="3.30.1140.32:FF:000003">
    <property type="entry name" value="30S ribosomal protein S3, chloroplastic"/>
    <property type="match status" value="1"/>
</dbReference>
<dbReference type="FunFam" id="3.30.300.20:FF:000008">
    <property type="entry name" value="30S ribosomal protein S3, chloroplastic"/>
    <property type="match status" value="1"/>
</dbReference>
<dbReference type="Gene3D" id="3.30.300.20">
    <property type="match status" value="1"/>
</dbReference>
<dbReference type="Gene3D" id="3.30.1140.32">
    <property type="entry name" value="Ribosomal protein S3, C-terminal domain"/>
    <property type="match status" value="1"/>
</dbReference>
<dbReference type="HAMAP" id="MF_01309_B">
    <property type="entry name" value="Ribosomal_uS3_B"/>
    <property type="match status" value="1"/>
</dbReference>
<dbReference type="InterPro" id="IPR015946">
    <property type="entry name" value="KH_dom-like_a/b"/>
</dbReference>
<dbReference type="InterPro" id="IPR004044">
    <property type="entry name" value="KH_dom_type_2"/>
</dbReference>
<dbReference type="InterPro" id="IPR009019">
    <property type="entry name" value="KH_sf_prok-type"/>
</dbReference>
<dbReference type="InterPro" id="IPR036419">
    <property type="entry name" value="Ribosomal_S3_C_sf"/>
</dbReference>
<dbReference type="InterPro" id="IPR005704">
    <property type="entry name" value="Ribosomal_uS3_bac-typ"/>
</dbReference>
<dbReference type="InterPro" id="IPR001351">
    <property type="entry name" value="Ribosomal_uS3_C"/>
</dbReference>
<dbReference type="InterPro" id="IPR018280">
    <property type="entry name" value="Ribosomal_uS3_CS"/>
</dbReference>
<dbReference type="NCBIfam" id="TIGR01009">
    <property type="entry name" value="rpsC_bact"/>
    <property type="match status" value="1"/>
</dbReference>
<dbReference type="PANTHER" id="PTHR11760">
    <property type="entry name" value="30S/40S RIBOSOMAL PROTEIN S3"/>
    <property type="match status" value="1"/>
</dbReference>
<dbReference type="PANTHER" id="PTHR11760:SF19">
    <property type="entry name" value="SMALL RIBOSOMAL SUBUNIT PROTEIN US3C"/>
    <property type="match status" value="1"/>
</dbReference>
<dbReference type="Pfam" id="PF00189">
    <property type="entry name" value="Ribosomal_S3_C"/>
    <property type="match status" value="1"/>
</dbReference>
<dbReference type="SUPFAM" id="SSF54814">
    <property type="entry name" value="Prokaryotic type KH domain (KH-domain type II)"/>
    <property type="match status" value="1"/>
</dbReference>
<dbReference type="SUPFAM" id="SSF54821">
    <property type="entry name" value="Ribosomal protein S3 C-terminal domain"/>
    <property type="match status" value="1"/>
</dbReference>
<dbReference type="PROSITE" id="PS50823">
    <property type="entry name" value="KH_TYPE_2"/>
    <property type="match status" value="1"/>
</dbReference>
<dbReference type="PROSITE" id="PS00548">
    <property type="entry name" value="RIBOSOMAL_S3"/>
    <property type="match status" value="1"/>
</dbReference>